<comment type="alternative products">
    <event type="alternative splicing"/>
    <isoform>
        <id>Q9DAQ4-1</id>
        <name>1</name>
        <sequence type="displayed"/>
    </isoform>
    <isoform>
        <id>Q9DAQ4-2</id>
        <name>2</name>
        <sequence type="described" ref="VSP_032776"/>
    </isoform>
    <isoform>
        <id>Q9DAQ4-3</id>
        <name>3</name>
        <sequence type="described" ref="VSP_032777"/>
    </isoform>
</comment>
<protein>
    <recommendedName>
        <fullName>Uncharacterized protein C2orf81 homolog</fullName>
    </recommendedName>
</protein>
<name>CB081_MOUSE</name>
<reference key="1">
    <citation type="journal article" date="2005" name="Science">
        <title>The transcriptional landscape of the mammalian genome.</title>
        <authorList>
            <person name="Carninci P."/>
            <person name="Kasukawa T."/>
            <person name="Katayama S."/>
            <person name="Gough J."/>
            <person name="Frith M.C."/>
            <person name="Maeda N."/>
            <person name="Oyama R."/>
            <person name="Ravasi T."/>
            <person name="Lenhard B."/>
            <person name="Wells C."/>
            <person name="Kodzius R."/>
            <person name="Shimokawa K."/>
            <person name="Bajic V.B."/>
            <person name="Brenner S.E."/>
            <person name="Batalov S."/>
            <person name="Forrest A.R."/>
            <person name="Zavolan M."/>
            <person name="Davis M.J."/>
            <person name="Wilming L.G."/>
            <person name="Aidinis V."/>
            <person name="Allen J.E."/>
            <person name="Ambesi-Impiombato A."/>
            <person name="Apweiler R."/>
            <person name="Aturaliya R.N."/>
            <person name="Bailey T.L."/>
            <person name="Bansal M."/>
            <person name="Baxter L."/>
            <person name="Beisel K.W."/>
            <person name="Bersano T."/>
            <person name="Bono H."/>
            <person name="Chalk A.M."/>
            <person name="Chiu K.P."/>
            <person name="Choudhary V."/>
            <person name="Christoffels A."/>
            <person name="Clutterbuck D.R."/>
            <person name="Crowe M.L."/>
            <person name="Dalla E."/>
            <person name="Dalrymple B.P."/>
            <person name="de Bono B."/>
            <person name="Della Gatta G."/>
            <person name="di Bernardo D."/>
            <person name="Down T."/>
            <person name="Engstrom P."/>
            <person name="Fagiolini M."/>
            <person name="Faulkner G."/>
            <person name="Fletcher C.F."/>
            <person name="Fukushima T."/>
            <person name="Furuno M."/>
            <person name="Futaki S."/>
            <person name="Gariboldi M."/>
            <person name="Georgii-Hemming P."/>
            <person name="Gingeras T.R."/>
            <person name="Gojobori T."/>
            <person name="Green R.E."/>
            <person name="Gustincich S."/>
            <person name="Harbers M."/>
            <person name="Hayashi Y."/>
            <person name="Hensch T.K."/>
            <person name="Hirokawa N."/>
            <person name="Hill D."/>
            <person name="Huminiecki L."/>
            <person name="Iacono M."/>
            <person name="Ikeo K."/>
            <person name="Iwama A."/>
            <person name="Ishikawa T."/>
            <person name="Jakt M."/>
            <person name="Kanapin A."/>
            <person name="Katoh M."/>
            <person name="Kawasawa Y."/>
            <person name="Kelso J."/>
            <person name="Kitamura H."/>
            <person name="Kitano H."/>
            <person name="Kollias G."/>
            <person name="Krishnan S.P."/>
            <person name="Kruger A."/>
            <person name="Kummerfeld S.K."/>
            <person name="Kurochkin I.V."/>
            <person name="Lareau L.F."/>
            <person name="Lazarevic D."/>
            <person name="Lipovich L."/>
            <person name="Liu J."/>
            <person name="Liuni S."/>
            <person name="McWilliam S."/>
            <person name="Madan Babu M."/>
            <person name="Madera M."/>
            <person name="Marchionni L."/>
            <person name="Matsuda H."/>
            <person name="Matsuzawa S."/>
            <person name="Miki H."/>
            <person name="Mignone F."/>
            <person name="Miyake S."/>
            <person name="Morris K."/>
            <person name="Mottagui-Tabar S."/>
            <person name="Mulder N."/>
            <person name="Nakano N."/>
            <person name="Nakauchi H."/>
            <person name="Ng P."/>
            <person name="Nilsson R."/>
            <person name="Nishiguchi S."/>
            <person name="Nishikawa S."/>
            <person name="Nori F."/>
            <person name="Ohara O."/>
            <person name="Okazaki Y."/>
            <person name="Orlando V."/>
            <person name="Pang K.C."/>
            <person name="Pavan W.J."/>
            <person name="Pavesi G."/>
            <person name="Pesole G."/>
            <person name="Petrovsky N."/>
            <person name="Piazza S."/>
            <person name="Reed J."/>
            <person name="Reid J.F."/>
            <person name="Ring B.Z."/>
            <person name="Ringwald M."/>
            <person name="Rost B."/>
            <person name="Ruan Y."/>
            <person name="Salzberg S.L."/>
            <person name="Sandelin A."/>
            <person name="Schneider C."/>
            <person name="Schoenbach C."/>
            <person name="Sekiguchi K."/>
            <person name="Semple C.A."/>
            <person name="Seno S."/>
            <person name="Sessa L."/>
            <person name="Sheng Y."/>
            <person name="Shibata Y."/>
            <person name="Shimada H."/>
            <person name="Shimada K."/>
            <person name="Silva D."/>
            <person name="Sinclair B."/>
            <person name="Sperling S."/>
            <person name="Stupka E."/>
            <person name="Sugiura K."/>
            <person name="Sultana R."/>
            <person name="Takenaka Y."/>
            <person name="Taki K."/>
            <person name="Tammoja K."/>
            <person name="Tan S.L."/>
            <person name="Tang S."/>
            <person name="Taylor M.S."/>
            <person name="Tegner J."/>
            <person name="Teichmann S.A."/>
            <person name="Ueda H.R."/>
            <person name="van Nimwegen E."/>
            <person name="Verardo R."/>
            <person name="Wei C.L."/>
            <person name="Yagi K."/>
            <person name="Yamanishi H."/>
            <person name="Zabarovsky E."/>
            <person name="Zhu S."/>
            <person name="Zimmer A."/>
            <person name="Hide W."/>
            <person name="Bult C."/>
            <person name="Grimmond S.M."/>
            <person name="Teasdale R.D."/>
            <person name="Liu E.T."/>
            <person name="Brusic V."/>
            <person name="Quackenbush J."/>
            <person name="Wahlestedt C."/>
            <person name="Mattick J.S."/>
            <person name="Hume D.A."/>
            <person name="Kai C."/>
            <person name="Sasaki D."/>
            <person name="Tomaru Y."/>
            <person name="Fukuda S."/>
            <person name="Kanamori-Katayama M."/>
            <person name="Suzuki M."/>
            <person name="Aoki J."/>
            <person name="Arakawa T."/>
            <person name="Iida J."/>
            <person name="Imamura K."/>
            <person name="Itoh M."/>
            <person name="Kato T."/>
            <person name="Kawaji H."/>
            <person name="Kawagashira N."/>
            <person name="Kawashima T."/>
            <person name="Kojima M."/>
            <person name="Kondo S."/>
            <person name="Konno H."/>
            <person name="Nakano K."/>
            <person name="Ninomiya N."/>
            <person name="Nishio T."/>
            <person name="Okada M."/>
            <person name="Plessy C."/>
            <person name="Shibata K."/>
            <person name="Shiraki T."/>
            <person name="Suzuki S."/>
            <person name="Tagami M."/>
            <person name="Waki K."/>
            <person name="Watahiki A."/>
            <person name="Okamura-Oho Y."/>
            <person name="Suzuki H."/>
            <person name="Kawai J."/>
            <person name="Hayashizaki Y."/>
        </authorList>
    </citation>
    <scope>NUCLEOTIDE SEQUENCE [LARGE SCALE MRNA] (ISOFORM 3)</scope>
    <source>
        <strain>C57BL/6J</strain>
        <tissue>Testis</tissue>
    </source>
</reference>
<reference key="2">
    <citation type="journal article" date="2009" name="PLoS Biol.">
        <title>Lineage-specific biology revealed by a finished genome assembly of the mouse.</title>
        <authorList>
            <person name="Church D.M."/>
            <person name="Goodstadt L."/>
            <person name="Hillier L.W."/>
            <person name="Zody M.C."/>
            <person name="Goldstein S."/>
            <person name="She X."/>
            <person name="Bult C.J."/>
            <person name="Agarwala R."/>
            <person name="Cherry J.L."/>
            <person name="DiCuccio M."/>
            <person name="Hlavina W."/>
            <person name="Kapustin Y."/>
            <person name="Meric P."/>
            <person name="Maglott D."/>
            <person name="Birtle Z."/>
            <person name="Marques A.C."/>
            <person name="Graves T."/>
            <person name="Zhou S."/>
            <person name="Teague B."/>
            <person name="Potamousis K."/>
            <person name="Churas C."/>
            <person name="Place M."/>
            <person name="Herschleb J."/>
            <person name="Runnheim R."/>
            <person name="Forrest D."/>
            <person name="Amos-Landgraf J."/>
            <person name="Schwartz D.C."/>
            <person name="Cheng Z."/>
            <person name="Lindblad-Toh K."/>
            <person name="Eichler E.E."/>
            <person name="Ponting C.P."/>
        </authorList>
    </citation>
    <scope>NUCLEOTIDE SEQUENCE [LARGE SCALE GENOMIC DNA]</scope>
    <source>
        <strain>C57BL/6J</strain>
    </source>
</reference>
<reference key="3">
    <citation type="journal article" date="2004" name="Genome Res.">
        <title>The status, quality, and expansion of the NIH full-length cDNA project: the Mammalian Gene Collection (MGC).</title>
        <authorList>
            <consortium name="The MGC Project Team"/>
        </authorList>
    </citation>
    <scope>NUCLEOTIDE SEQUENCE [LARGE SCALE MRNA] (ISOFORM 2)</scope>
</reference>
<organism>
    <name type="scientific">Mus musculus</name>
    <name type="common">Mouse</name>
    <dbReference type="NCBI Taxonomy" id="10090"/>
    <lineage>
        <taxon>Eukaryota</taxon>
        <taxon>Metazoa</taxon>
        <taxon>Chordata</taxon>
        <taxon>Craniata</taxon>
        <taxon>Vertebrata</taxon>
        <taxon>Euteleostomi</taxon>
        <taxon>Mammalia</taxon>
        <taxon>Eutheria</taxon>
        <taxon>Euarchontoglires</taxon>
        <taxon>Glires</taxon>
        <taxon>Rodentia</taxon>
        <taxon>Myomorpha</taxon>
        <taxon>Muroidea</taxon>
        <taxon>Muridae</taxon>
        <taxon>Murinae</taxon>
        <taxon>Mus</taxon>
        <taxon>Mus</taxon>
    </lineage>
</organism>
<feature type="chain" id="PRO_0000328767" description="Uncharacterized protein C2orf81 homolog">
    <location>
        <begin position="1"/>
        <end position="598"/>
    </location>
</feature>
<feature type="region of interest" description="Disordered" evidence="2">
    <location>
        <begin position="1"/>
        <end position="32"/>
    </location>
</feature>
<feature type="region of interest" description="Disordered" evidence="2">
    <location>
        <begin position="151"/>
        <end position="190"/>
    </location>
</feature>
<feature type="region of interest" description="Disordered" evidence="2">
    <location>
        <begin position="222"/>
        <end position="241"/>
    </location>
</feature>
<feature type="region of interest" description="Disordered" evidence="2">
    <location>
        <begin position="366"/>
        <end position="396"/>
    </location>
</feature>
<feature type="region of interest" description="Disordered" evidence="2">
    <location>
        <begin position="551"/>
        <end position="571"/>
    </location>
</feature>
<feature type="compositionally biased region" description="Basic and acidic residues" evidence="2">
    <location>
        <begin position="1"/>
        <end position="23"/>
    </location>
</feature>
<feature type="compositionally biased region" description="Basic and acidic residues" evidence="2">
    <location>
        <begin position="225"/>
        <end position="235"/>
    </location>
</feature>
<feature type="compositionally biased region" description="Polar residues" evidence="2">
    <location>
        <begin position="369"/>
        <end position="386"/>
    </location>
</feature>
<feature type="compositionally biased region" description="Polar residues" evidence="2">
    <location>
        <begin position="558"/>
        <end position="569"/>
    </location>
</feature>
<feature type="modified residue" description="Phosphoserine" evidence="1">
    <location>
        <position position="238"/>
    </location>
</feature>
<feature type="modified residue" description="Phosphoserine" evidence="1">
    <location>
        <position position="242"/>
    </location>
</feature>
<feature type="splice variant" id="VSP_032776" description="In isoform 2." evidence="3">
    <location>
        <begin position="1"/>
        <end position="217"/>
    </location>
</feature>
<feature type="splice variant" id="VSP_032777" description="In isoform 3." evidence="4">
    <location>
        <begin position="1"/>
        <end position="92"/>
    </location>
</feature>
<feature type="sequence conflict" description="In Ref. 3; AAI26950." evidence="5" ref="3">
    <original>P</original>
    <variation>R</variation>
    <location>
        <position position="365"/>
    </location>
</feature>
<dbReference type="EMBL" id="AK005628">
    <property type="protein sequence ID" value="BAB24157.1"/>
    <property type="molecule type" value="mRNA"/>
</dbReference>
<dbReference type="EMBL" id="AC104324">
    <property type="status" value="NOT_ANNOTATED_CDS"/>
    <property type="molecule type" value="Genomic_DNA"/>
</dbReference>
<dbReference type="EMBL" id="AC160400">
    <property type="status" value="NOT_ANNOTATED_CDS"/>
    <property type="molecule type" value="Genomic_DNA"/>
</dbReference>
<dbReference type="EMBL" id="BC126949">
    <property type="protein sequence ID" value="AAI26950.1"/>
    <property type="molecule type" value="mRNA"/>
</dbReference>
<dbReference type="CCDS" id="CCDS51818.1">
    <molecule id="Q9DAQ4-1"/>
</dbReference>
<dbReference type="RefSeq" id="NP_082224.1">
    <molecule id="Q9DAQ4-1"/>
    <property type="nucleotide sequence ID" value="NM_027948.1"/>
</dbReference>
<dbReference type="FunCoup" id="Q9DAQ4">
    <property type="interactions" value="10"/>
</dbReference>
<dbReference type="STRING" id="10090.ENSMUSP00000032106"/>
<dbReference type="GlyGen" id="Q9DAQ4">
    <property type="glycosylation" value="1 site"/>
</dbReference>
<dbReference type="iPTMnet" id="Q9DAQ4"/>
<dbReference type="PhosphoSitePlus" id="Q9DAQ4"/>
<dbReference type="SwissPalm" id="Q9DAQ4"/>
<dbReference type="PaxDb" id="10090-ENSMUSP00000032106"/>
<dbReference type="Ensembl" id="ENSMUST00000032106.6">
    <molecule id="Q9DAQ4-1"/>
    <property type="protein sequence ID" value="ENSMUSP00000032106.5"/>
    <property type="gene ID" value="ENSMUSG00000030030.6"/>
</dbReference>
<dbReference type="GeneID" id="71837"/>
<dbReference type="KEGG" id="mmu:71837"/>
<dbReference type="UCSC" id="uc009cmx.2">
    <molecule id="Q9DAQ4-1"/>
    <property type="organism name" value="mouse"/>
</dbReference>
<dbReference type="AGR" id="MGI:1919087"/>
<dbReference type="MGI" id="MGI:1919087">
    <property type="gene designation" value="1700003E16Rik"/>
</dbReference>
<dbReference type="VEuPathDB" id="HostDB:ENSMUSG00000030030"/>
<dbReference type="eggNOG" id="KOG1208">
    <property type="taxonomic scope" value="Eukaryota"/>
</dbReference>
<dbReference type="GeneTree" id="ENSGT00390000014979"/>
<dbReference type="HOGENOM" id="CLU_032316_0_0_1"/>
<dbReference type="InParanoid" id="Q9DAQ4"/>
<dbReference type="OMA" id="WKPMLLP"/>
<dbReference type="OrthoDB" id="193650at2759"/>
<dbReference type="PhylomeDB" id="Q9DAQ4"/>
<dbReference type="TreeFam" id="TF336850"/>
<dbReference type="BioGRID-ORCS" id="71837">
    <property type="hits" value="3 hits in 79 CRISPR screens"/>
</dbReference>
<dbReference type="PRO" id="PR:Q9DAQ4"/>
<dbReference type="Proteomes" id="UP000000589">
    <property type="component" value="Chromosome 6"/>
</dbReference>
<dbReference type="RNAct" id="Q9DAQ4">
    <property type="molecule type" value="protein"/>
</dbReference>
<dbReference type="Bgee" id="ENSMUSG00000030030">
    <property type="expression patterns" value="Expressed in spermatid and 60 other cell types or tissues"/>
</dbReference>
<dbReference type="ExpressionAtlas" id="Q9DAQ4">
    <property type="expression patterns" value="baseline and differential"/>
</dbReference>
<dbReference type="InterPro" id="IPR028042">
    <property type="entry name" value="DUF4639"/>
</dbReference>
<dbReference type="PANTHER" id="PTHR34438:SF1">
    <property type="entry name" value="CHROMOSOME 2 OPEN READING FRAME 81"/>
    <property type="match status" value="1"/>
</dbReference>
<dbReference type="PANTHER" id="PTHR34438">
    <property type="entry name" value="SI:DKEY-97L20.6"/>
    <property type="match status" value="1"/>
</dbReference>
<dbReference type="Pfam" id="PF15479">
    <property type="entry name" value="DUF4639"/>
    <property type="match status" value="1"/>
</dbReference>
<sequence length="598" mass="65778">MSHEGSRQARDRGVTRSKAEKARPPTQPVPQVDIVPGRLNEAEWIAFMSLEEGEDVVGDILADLMTRVMECAFKVYLTQQCVPFTISQAREAMLQITEWRFLARDEGESAVAEDPTWGEDEEPLACTTDSWAQGSVPVLHTPAPVCVEEQFHNEEPGNPDQFLLGSSWDKESQKPTQPSEPSAEPKVTPRPTATLEAFEEAEPGDALEVPHGQEGSHMLAVPSKESLRSTAEGERVYSPQSSLKQPQVVRLQASEKESSFGSHLSLEDLYLCMPQPDAAGDRLSLQSKGQLHSSPIGSESHLGALTPAEPSAFQEPEVLGERPKHKTTTLRMDSSRLPRHWVRPVAEVLIPDLEVHPLEIYRGRPRRSQAGTATSACESQALSSRAPSKPHVSSPRFPLQRCATFRALGPDPSLNLAQTSPSFGSNVPFLSPGFRFLPRNPIPPDVASTPTPKLWPLAKWPSGWEREAEQLGELWAGRTRVPPQGQEPVEVTPLEEDSGWPLAAPQVLEATSQVLWKPMVISETMKLVPGVSMWNRGTQELLNPAVIRKEAEEGTPQAPEQQPIQTGVSKPQVIMKQIRNETPKAWLLPTKPVPHSGS</sequence>
<evidence type="ECO:0000250" key="1">
    <source>
        <dbReference type="UniProtKB" id="Q6AXP4"/>
    </source>
</evidence>
<evidence type="ECO:0000256" key="2">
    <source>
        <dbReference type="SAM" id="MobiDB-lite"/>
    </source>
</evidence>
<evidence type="ECO:0000303" key="3">
    <source>
    </source>
</evidence>
<evidence type="ECO:0000303" key="4">
    <source>
    </source>
</evidence>
<evidence type="ECO:0000305" key="5"/>
<proteinExistence type="evidence at transcript level"/>
<accession>Q9DAQ4</accession>
<accession>A0JNU0</accession>
<keyword id="KW-0025">Alternative splicing</keyword>
<keyword id="KW-0597">Phosphoprotein</keyword>
<keyword id="KW-1185">Reference proteome</keyword>